<feature type="chain" id="PRO_1000059969" description="Large ribosomal subunit protein uL29">
    <location>
        <begin position="1"/>
        <end position="68"/>
    </location>
</feature>
<dbReference type="EMBL" id="CP000705">
    <property type="protein sequence ID" value="ABQ83721.1"/>
    <property type="molecule type" value="Genomic_DNA"/>
</dbReference>
<dbReference type="RefSeq" id="WP_003664552.1">
    <property type="nucleotide sequence ID" value="NZ_AZDD01000010.1"/>
</dbReference>
<dbReference type="SMR" id="A5VLJ7"/>
<dbReference type="STRING" id="557436.Lreu_1475"/>
<dbReference type="GeneID" id="77191471"/>
<dbReference type="KEGG" id="lre:Lreu_1475"/>
<dbReference type="PATRIC" id="fig|557436.17.peg.148"/>
<dbReference type="eggNOG" id="COG0255">
    <property type="taxonomic scope" value="Bacteria"/>
</dbReference>
<dbReference type="HOGENOM" id="CLU_158491_5_2_9"/>
<dbReference type="Proteomes" id="UP000001991">
    <property type="component" value="Chromosome"/>
</dbReference>
<dbReference type="GO" id="GO:0022625">
    <property type="term" value="C:cytosolic large ribosomal subunit"/>
    <property type="evidence" value="ECO:0007669"/>
    <property type="project" value="TreeGrafter"/>
</dbReference>
<dbReference type="GO" id="GO:0003735">
    <property type="term" value="F:structural constituent of ribosome"/>
    <property type="evidence" value="ECO:0007669"/>
    <property type="project" value="InterPro"/>
</dbReference>
<dbReference type="GO" id="GO:0006412">
    <property type="term" value="P:translation"/>
    <property type="evidence" value="ECO:0007669"/>
    <property type="project" value="UniProtKB-UniRule"/>
</dbReference>
<dbReference type="CDD" id="cd00427">
    <property type="entry name" value="Ribosomal_L29_HIP"/>
    <property type="match status" value="1"/>
</dbReference>
<dbReference type="FunFam" id="1.10.287.310:FF:000001">
    <property type="entry name" value="50S ribosomal protein L29"/>
    <property type="match status" value="1"/>
</dbReference>
<dbReference type="Gene3D" id="1.10.287.310">
    <property type="match status" value="1"/>
</dbReference>
<dbReference type="HAMAP" id="MF_00374">
    <property type="entry name" value="Ribosomal_uL29"/>
    <property type="match status" value="1"/>
</dbReference>
<dbReference type="InterPro" id="IPR050063">
    <property type="entry name" value="Ribosomal_protein_uL29"/>
</dbReference>
<dbReference type="InterPro" id="IPR001854">
    <property type="entry name" value="Ribosomal_uL29"/>
</dbReference>
<dbReference type="InterPro" id="IPR018254">
    <property type="entry name" value="Ribosomal_uL29_CS"/>
</dbReference>
<dbReference type="InterPro" id="IPR036049">
    <property type="entry name" value="Ribosomal_uL29_sf"/>
</dbReference>
<dbReference type="NCBIfam" id="TIGR00012">
    <property type="entry name" value="L29"/>
    <property type="match status" value="1"/>
</dbReference>
<dbReference type="PANTHER" id="PTHR10916">
    <property type="entry name" value="60S RIBOSOMAL PROTEIN L35/50S RIBOSOMAL PROTEIN L29"/>
    <property type="match status" value="1"/>
</dbReference>
<dbReference type="PANTHER" id="PTHR10916:SF0">
    <property type="entry name" value="LARGE RIBOSOMAL SUBUNIT PROTEIN UL29C"/>
    <property type="match status" value="1"/>
</dbReference>
<dbReference type="Pfam" id="PF00831">
    <property type="entry name" value="Ribosomal_L29"/>
    <property type="match status" value="1"/>
</dbReference>
<dbReference type="SUPFAM" id="SSF46561">
    <property type="entry name" value="Ribosomal protein L29 (L29p)"/>
    <property type="match status" value="1"/>
</dbReference>
<dbReference type="PROSITE" id="PS00579">
    <property type="entry name" value="RIBOSOMAL_L29"/>
    <property type="match status" value="1"/>
</dbReference>
<sequence length="68" mass="8004">MKSKDYVQELNGLTTDKLLDREKELKEQLFNLRFQLATGQLENTASLKQVRKDIARVKTVLRQQELNK</sequence>
<name>RL29_LIMRD</name>
<comment type="similarity">
    <text evidence="1">Belongs to the universal ribosomal protein uL29 family.</text>
</comment>
<reference key="1">
    <citation type="journal article" date="2011" name="PLoS Genet.">
        <title>The evolution of host specialization in the vertebrate gut symbiont Lactobacillus reuteri.</title>
        <authorList>
            <person name="Frese S.A."/>
            <person name="Benson A.K."/>
            <person name="Tannock G.W."/>
            <person name="Loach D.M."/>
            <person name="Kim J."/>
            <person name="Zhang M."/>
            <person name="Oh P.L."/>
            <person name="Heng N.C."/>
            <person name="Patil P.B."/>
            <person name="Juge N."/>
            <person name="Mackenzie D.A."/>
            <person name="Pearson B.M."/>
            <person name="Lapidus A."/>
            <person name="Dalin E."/>
            <person name="Tice H."/>
            <person name="Goltsman E."/>
            <person name="Land M."/>
            <person name="Hauser L."/>
            <person name="Ivanova N."/>
            <person name="Kyrpides N.C."/>
            <person name="Walter J."/>
        </authorList>
    </citation>
    <scope>NUCLEOTIDE SEQUENCE [LARGE SCALE GENOMIC DNA]</scope>
    <source>
        <strain>DSM 20016</strain>
    </source>
</reference>
<protein>
    <recommendedName>
        <fullName evidence="1">Large ribosomal subunit protein uL29</fullName>
    </recommendedName>
    <alternativeName>
        <fullName evidence="2">50S ribosomal protein L29</fullName>
    </alternativeName>
</protein>
<organism>
    <name type="scientific">Limosilactobacillus reuteri (strain DSM 20016)</name>
    <name type="common">Lactobacillus reuteri</name>
    <dbReference type="NCBI Taxonomy" id="557436"/>
    <lineage>
        <taxon>Bacteria</taxon>
        <taxon>Bacillati</taxon>
        <taxon>Bacillota</taxon>
        <taxon>Bacilli</taxon>
        <taxon>Lactobacillales</taxon>
        <taxon>Lactobacillaceae</taxon>
        <taxon>Limosilactobacillus</taxon>
    </lineage>
</organism>
<evidence type="ECO:0000255" key="1">
    <source>
        <dbReference type="HAMAP-Rule" id="MF_00374"/>
    </source>
</evidence>
<evidence type="ECO:0000305" key="2"/>
<keyword id="KW-1185">Reference proteome</keyword>
<keyword id="KW-0687">Ribonucleoprotein</keyword>
<keyword id="KW-0689">Ribosomal protein</keyword>
<proteinExistence type="inferred from homology"/>
<accession>A5VLJ7</accession>
<gene>
    <name evidence="1" type="primary">rpmC</name>
    <name type="ordered locus">Lreu_1475</name>
</gene>